<reference key="1">
    <citation type="journal article" date="1997" name="Nature">
        <title>The nucleotide sequence of Saccharomyces cerevisiae chromosome XII.</title>
        <authorList>
            <person name="Johnston M."/>
            <person name="Hillier L.W."/>
            <person name="Riles L."/>
            <person name="Albermann K."/>
            <person name="Andre B."/>
            <person name="Ansorge W."/>
            <person name="Benes V."/>
            <person name="Brueckner M."/>
            <person name="Delius H."/>
            <person name="Dubois E."/>
            <person name="Duesterhoeft A."/>
            <person name="Entian K.-D."/>
            <person name="Floeth M."/>
            <person name="Goffeau A."/>
            <person name="Hebling U."/>
            <person name="Heumann K."/>
            <person name="Heuss-Neitzel D."/>
            <person name="Hilbert H."/>
            <person name="Hilger F."/>
            <person name="Kleine K."/>
            <person name="Koetter P."/>
            <person name="Louis E.J."/>
            <person name="Messenguy F."/>
            <person name="Mewes H.-W."/>
            <person name="Miosga T."/>
            <person name="Moestl D."/>
            <person name="Mueller-Auer S."/>
            <person name="Nentwich U."/>
            <person name="Obermaier B."/>
            <person name="Piravandi E."/>
            <person name="Pohl T.M."/>
            <person name="Portetelle D."/>
            <person name="Purnelle B."/>
            <person name="Rechmann S."/>
            <person name="Rieger M."/>
            <person name="Rinke M."/>
            <person name="Rose M."/>
            <person name="Scharfe M."/>
            <person name="Scherens B."/>
            <person name="Scholler P."/>
            <person name="Schwager C."/>
            <person name="Schwarz S."/>
            <person name="Underwood A.P."/>
            <person name="Urrestarazu L.A."/>
            <person name="Vandenbol M."/>
            <person name="Verhasselt P."/>
            <person name="Vierendeels F."/>
            <person name="Voet M."/>
            <person name="Volckaert G."/>
            <person name="Voss H."/>
            <person name="Wambutt R."/>
            <person name="Wedler E."/>
            <person name="Wedler H."/>
            <person name="Zimmermann F.K."/>
            <person name="Zollner A."/>
            <person name="Hani J."/>
            <person name="Hoheisel J.D."/>
        </authorList>
    </citation>
    <scope>NUCLEOTIDE SEQUENCE [LARGE SCALE GENOMIC DNA]</scope>
    <source>
        <strain>ATCC 204508 / S288c</strain>
    </source>
</reference>
<reference key="2">
    <citation type="journal article" date="2014" name="G3 (Bethesda)">
        <title>The reference genome sequence of Saccharomyces cerevisiae: Then and now.</title>
        <authorList>
            <person name="Engel S.R."/>
            <person name="Dietrich F.S."/>
            <person name="Fisk D.G."/>
            <person name="Binkley G."/>
            <person name="Balakrishnan R."/>
            <person name="Costanzo M.C."/>
            <person name="Dwight S.S."/>
            <person name="Hitz B.C."/>
            <person name="Karra K."/>
            <person name="Nash R.S."/>
            <person name="Weng S."/>
            <person name="Wong E.D."/>
            <person name="Lloyd P."/>
            <person name="Skrzypek M.S."/>
            <person name="Miyasato S.R."/>
            <person name="Simison M."/>
            <person name="Cherry J.M."/>
        </authorList>
    </citation>
    <scope>GENOME REANNOTATION</scope>
    <source>
        <strain>ATCC 204508 / S288c</strain>
    </source>
</reference>
<sequence>MAAEGPVAKRLISVILRYNYGMNPLGSLSSAKKRGHVSKIESLPGLSSRANLRRRTTRCRPERRRFYSGTVNRNARSAGAASRSTSSVKRPLESKKRNARPETEKWCASYSAGNRR</sequence>
<feature type="chain" id="PRO_0000299629" description="Putative uncharacterized protein YLR280C">
    <location>
        <begin position="1"/>
        <end position="116"/>
    </location>
</feature>
<feature type="region of interest" description="Disordered" evidence="1">
    <location>
        <begin position="64"/>
        <end position="116"/>
    </location>
</feature>
<feature type="compositionally biased region" description="Low complexity" evidence="1">
    <location>
        <begin position="73"/>
        <end position="87"/>
    </location>
</feature>
<feature type="compositionally biased region" description="Basic and acidic residues" evidence="1">
    <location>
        <begin position="90"/>
        <end position="105"/>
    </location>
</feature>
<proteinExistence type="uncertain"/>
<accession>O13541</accession>
<protein>
    <recommendedName>
        <fullName>Putative uncharacterized protein YLR280C</fullName>
    </recommendedName>
</protein>
<evidence type="ECO:0000256" key="1">
    <source>
        <dbReference type="SAM" id="MobiDB-lite"/>
    </source>
</evidence>
<evidence type="ECO:0000305" key="2"/>
<evidence type="ECO:0000305" key="3">
    <source>
    </source>
</evidence>
<organism>
    <name type="scientific">Saccharomyces cerevisiae (strain ATCC 204508 / S288c)</name>
    <name type="common">Baker's yeast</name>
    <dbReference type="NCBI Taxonomy" id="559292"/>
    <lineage>
        <taxon>Eukaryota</taxon>
        <taxon>Fungi</taxon>
        <taxon>Dikarya</taxon>
        <taxon>Ascomycota</taxon>
        <taxon>Saccharomycotina</taxon>
        <taxon>Saccharomycetes</taxon>
        <taxon>Saccharomycetales</taxon>
        <taxon>Saccharomycetaceae</taxon>
        <taxon>Saccharomyces</taxon>
    </lineage>
</organism>
<gene>
    <name type="ordered locus">YLR280C</name>
</gene>
<dbReference type="EMBL" id="U17243">
    <property type="protein sequence ID" value="AAB67350.1"/>
    <property type="molecule type" value="Genomic_DNA"/>
</dbReference>
<dbReference type="PIR" id="S69305">
    <property type="entry name" value="S69305"/>
</dbReference>
<dbReference type="STRING" id="4932.YLR280C"/>
<dbReference type="PaxDb" id="4932-YLR280C"/>
<dbReference type="EnsemblFungi" id="YLR280C_mRNA">
    <property type="protein sequence ID" value="YLR280C"/>
    <property type="gene ID" value="YLR280C"/>
</dbReference>
<dbReference type="AGR" id="SGD:S000004270"/>
<dbReference type="SGD" id="S000004270">
    <property type="gene designation" value="YLR280C"/>
</dbReference>
<dbReference type="HOGENOM" id="CLU_2098748_0_0_1"/>
<comment type="miscellaneous">
    <text evidence="2">Partially overlaps YLR279W and YLR281C.</text>
</comment>
<comment type="caution">
    <text evidence="3">Product of a dubious gene prediction unlikely to encode a functional protein. Because of that it is not part of the S.cerevisiae S288c complete/reference proteome set.</text>
</comment>
<name>YL280_YEAST</name>